<sequence length="189" mass="20302">MGRTRDNKAAVIADLKELLSDAQLAFVIDYQGLSVSEITELRNRLRPTGSICKVTKNTFMEMAVQEDDNWQPMTQFLTGSSAFVLVKDDVGGAVRAYQGFKKDTKKTEFRGGVMQGQALNEDQVKAIADLPSKEELMAQIAGALNSIATKLAVGINEVPSSVARGINEVPGSLGRVVNAIANKEEGNAA</sequence>
<reference key="1">
    <citation type="journal article" date="2011" name="MBio">
        <title>Novel metabolic attributes of the genus Cyanothece, comprising a group of unicellular nitrogen-fixing Cyanobacteria.</title>
        <authorList>
            <person name="Bandyopadhyay A."/>
            <person name="Elvitigala T."/>
            <person name="Welsh E."/>
            <person name="Stockel J."/>
            <person name="Liberton M."/>
            <person name="Min H."/>
            <person name="Sherman L.A."/>
            <person name="Pakrasi H.B."/>
        </authorList>
    </citation>
    <scope>NUCLEOTIDE SEQUENCE [LARGE SCALE GENOMIC DNA]</scope>
    <source>
        <strain>PCC 8801 / RF-1</strain>
    </source>
</reference>
<feature type="chain" id="PRO_1000120945" description="Large ribosomal subunit protein uL10">
    <location>
        <begin position="1"/>
        <end position="189"/>
    </location>
</feature>
<comment type="function">
    <text evidence="1">Forms part of the ribosomal stalk, playing a central role in the interaction of the ribosome with GTP-bound translation factors.</text>
</comment>
<comment type="subunit">
    <text evidence="1">Part of the ribosomal stalk of the 50S ribosomal subunit. The N-terminus interacts with L11 and the large rRNA to form the base of the stalk. The C-terminus forms an elongated spine to which L12 dimers bind in a sequential fashion forming a multimeric L10(L12)X complex.</text>
</comment>
<comment type="similarity">
    <text evidence="1">Belongs to the universal ribosomal protein uL10 family.</text>
</comment>
<proteinExistence type="inferred from homology"/>
<keyword id="KW-1185">Reference proteome</keyword>
<keyword id="KW-0687">Ribonucleoprotein</keyword>
<keyword id="KW-0689">Ribosomal protein</keyword>
<keyword id="KW-0694">RNA-binding</keyword>
<keyword id="KW-0699">rRNA-binding</keyword>
<gene>
    <name evidence="1" type="primary">rplJ</name>
    <name evidence="1" type="synonym">rpl10</name>
    <name type="ordered locus">PCC8801_1738</name>
</gene>
<name>RL10_RIPO1</name>
<organism>
    <name type="scientific">Rippkaea orientalis (strain PCC 8801 / RF-1)</name>
    <name type="common">Cyanothece sp. (strain PCC 8801)</name>
    <dbReference type="NCBI Taxonomy" id="41431"/>
    <lineage>
        <taxon>Bacteria</taxon>
        <taxon>Bacillati</taxon>
        <taxon>Cyanobacteriota</taxon>
        <taxon>Cyanophyceae</taxon>
        <taxon>Oscillatoriophycideae</taxon>
        <taxon>Chroococcales</taxon>
        <taxon>Aphanothecaceae</taxon>
        <taxon>Rippkaea</taxon>
        <taxon>Rippkaea orientalis</taxon>
    </lineage>
</organism>
<dbReference type="EMBL" id="CP001287">
    <property type="protein sequence ID" value="ACK65785.1"/>
    <property type="molecule type" value="Genomic_DNA"/>
</dbReference>
<dbReference type="RefSeq" id="WP_012595058.1">
    <property type="nucleotide sequence ID" value="NC_011726.1"/>
</dbReference>
<dbReference type="SMR" id="B7JWT6"/>
<dbReference type="STRING" id="41431.PCC8801_1738"/>
<dbReference type="KEGG" id="cyp:PCC8801_1738"/>
<dbReference type="eggNOG" id="COG0244">
    <property type="taxonomic scope" value="Bacteria"/>
</dbReference>
<dbReference type="HOGENOM" id="CLU_092227_1_1_3"/>
<dbReference type="OrthoDB" id="9808307at2"/>
<dbReference type="Proteomes" id="UP000008204">
    <property type="component" value="Chromosome"/>
</dbReference>
<dbReference type="GO" id="GO:0015934">
    <property type="term" value="C:large ribosomal subunit"/>
    <property type="evidence" value="ECO:0007669"/>
    <property type="project" value="InterPro"/>
</dbReference>
<dbReference type="GO" id="GO:0070180">
    <property type="term" value="F:large ribosomal subunit rRNA binding"/>
    <property type="evidence" value="ECO:0007669"/>
    <property type="project" value="UniProtKB-UniRule"/>
</dbReference>
<dbReference type="GO" id="GO:0003735">
    <property type="term" value="F:structural constituent of ribosome"/>
    <property type="evidence" value="ECO:0007669"/>
    <property type="project" value="InterPro"/>
</dbReference>
<dbReference type="GO" id="GO:0006412">
    <property type="term" value="P:translation"/>
    <property type="evidence" value="ECO:0007669"/>
    <property type="project" value="UniProtKB-UniRule"/>
</dbReference>
<dbReference type="CDD" id="cd05797">
    <property type="entry name" value="Ribosomal_L10"/>
    <property type="match status" value="1"/>
</dbReference>
<dbReference type="Gene3D" id="3.30.70.1730">
    <property type="match status" value="1"/>
</dbReference>
<dbReference type="Gene3D" id="6.10.250.290">
    <property type="match status" value="1"/>
</dbReference>
<dbReference type="HAMAP" id="MF_00362">
    <property type="entry name" value="Ribosomal_uL10"/>
    <property type="match status" value="1"/>
</dbReference>
<dbReference type="InterPro" id="IPR001790">
    <property type="entry name" value="Ribosomal_uL10"/>
</dbReference>
<dbReference type="InterPro" id="IPR043141">
    <property type="entry name" value="Ribosomal_uL10-like_sf"/>
</dbReference>
<dbReference type="InterPro" id="IPR022973">
    <property type="entry name" value="Ribosomal_uL10_bac"/>
</dbReference>
<dbReference type="InterPro" id="IPR047865">
    <property type="entry name" value="Ribosomal_uL10_bac_type"/>
</dbReference>
<dbReference type="InterPro" id="IPR002363">
    <property type="entry name" value="Ribosomal_uL10_CS_bac"/>
</dbReference>
<dbReference type="NCBIfam" id="NF000955">
    <property type="entry name" value="PRK00099.1-1"/>
    <property type="match status" value="1"/>
</dbReference>
<dbReference type="PANTHER" id="PTHR11560">
    <property type="entry name" value="39S RIBOSOMAL PROTEIN L10, MITOCHONDRIAL"/>
    <property type="match status" value="1"/>
</dbReference>
<dbReference type="Pfam" id="PF00466">
    <property type="entry name" value="Ribosomal_L10"/>
    <property type="match status" value="1"/>
</dbReference>
<dbReference type="SUPFAM" id="SSF160369">
    <property type="entry name" value="Ribosomal protein L10-like"/>
    <property type="match status" value="1"/>
</dbReference>
<dbReference type="PROSITE" id="PS01109">
    <property type="entry name" value="RIBOSOMAL_L10"/>
    <property type="match status" value="1"/>
</dbReference>
<evidence type="ECO:0000255" key="1">
    <source>
        <dbReference type="HAMAP-Rule" id="MF_00362"/>
    </source>
</evidence>
<evidence type="ECO:0000305" key="2"/>
<accession>B7JWT6</accession>
<protein>
    <recommendedName>
        <fullName evidence="1">Large ribosomal subunit protein uL10</fullName>
    </recommendedName>
    <alternativeName>
        <fullName evidence="2">50S ribosomal protein L10</fullName>
    </alternativeName>
</protein>